<evidence type="ECO:0000255" key="1">
    <source>
        <dbReference type="HAMAP-Rule" id="MF_01855"/>
    </source>
</evidence>
<keyword id="KW-0113">Calvin cycle</keyword>
<keyword id="KW-0119">Carbohydrate metabolism</keyword>
<keyword id="KW-0963">Cytoplasm</keyword>
<keyword id="KW-0378">Hydrolase</keyword>
<keyword id="KW-0460">Magnesium</keyword>
<keyword id="KW-0479">Metal-binding</keyword>
<feature type="chain" id="PRO_0000364677" description="Fructose-1,6-bisphosphatase class 1">
    <location>
        <begin position="1"/>
        <end position="345"/>
    </location>
</feature>
<feature type="binding site" evidence="1">
    <location>
        <position position="90"/>
    </location>
    <ligand>
        <name>Mg(2+)</name>
        <dbReference type="ChEBI" id="CHEBI:18420"/>
        <label>1</label>
    </ligand>
</feature>
<feature type="binding site" evidence="1">
    <location>
        <position position="109"/>
    </location>
    <ligand>
        <name>Mg(2+)</name>
        <dbReference type="ChEBI" id="CHEBI:18420"/>
        <label>1</label>
    </ligand>
</feature>
<feature type="binding site" evidence="1">
    <location>
        <position position="109"/>
    </location>
    <ligand>
        <name>Mg(2+)</name>
        <dbReference type="ChEBI" id="CHEBI:18420"/>
        <label>2</label>
    </ligand>
</feature>
<feature type="binding site" evidence="1">
    <location>
        <position position="111"/>
    </location>
    <ligand>
        <name>Mg(2+)</name>
        <dbReference type="ChEBI" id="CHEBI:18420"/>
        <label>1</label>
    </ligand>
</feature>
<feature type="binding site" evidence="1">
    <location>
        <begin position="112"/>
        <end position="115"/>
    </location>
    <ligand>
        <name>substrate</name>
    </ligand>
</feature>
<feature type="binding site" evidence="1">
    <location>
        <position position="112"/>
    </location>
    <ligand>
        <name>Mg(2+)</name>
        <dbReference type="ChEBI" id="CHEBI:18420"/>
        <label>2</label>
    </ligand>
</feature>
<feature type="binding site" evidence="1">
    <location>
        <position position="199"/>
    </location>
    <ligand>
        <name>substrate</name>
    </ligand>
</feature>
<feature type="binding site" evidence="1">
    <location>
        <position position="271"/>
    </location>
    <ligand>
        <name>Mg(2+)</name>
        <dbReference type="ChEBI" id="CHEBI:18420"/>
        <label>2</label>
    </ligand>
</feature>
<name>F16PA_RHOPS</name>
<sequence>MDQGQTLARLLDSYATDPRKRAVAAAVGAIAEASIEISELIGQGALAGITGAAHGASNADGDVQKDLDVRAEAAIVAALKNVPYAALASEEAEALLMGDPQAPISIAYDPLDGSSNIDTNMTVGTIFSIIPNEPGVAPFTAPGSCQLAAGFVVYGPQTSFVLTLGDGVDIFTLDRKDHVYRLIREKVKVAGDTAEYAINASNHRHWEQPVRDFVDECLAGADGPRAKNFNMRWIGSLVAEAYRILTRGGVFLYPADSRPGYGDGRLRLLYETHPMAFVMEQAGGAASTGRERVLDLSAAATSTHQRSPLIMGSSDKVNRIVELHLDPSAASRTAPLFGRRGLFRT</sequence>
<dbReference type="EC" id="3.1.3.11" evidence="1"/>
<dbReference type="EMBL" id="CP000283">
    <property type="protein sequence ID" value="ABE38288.1"/>
    <property type="molecule type" value="Genomic_DNA"/>
</dbReference>
<dbReference type="SMR" id="Q13CA1"/>
<dbReference type="STRING" id="316057.RPD_1050"/>
<dbReference type="KEGG" id="rpd:RPD_1050"/>
<dbReference type="eggNOG" id="COG0158">
    <property type="taxonomic scope" value="Bacteria"/>
</dbReference>
<dbReference type="HOGENOM" id="CLU_039977_0_0_5"/>
<dbReference type="BioCyc" id="RPAL316057:RPD_RS05335-MONOMER"/>
<dbReference type="UniPathway" id="UPA00116"/>
<dbReference type="Proteomes" id="UP000001818">
    <property type="component" value="Chromosome"/>
</dbReference>
<dbReference type="GO" id="GO:0005829">
    <property type="term" value="C:cytosol"/>
    <property type="evidence" value="ECO:0007669"/>
    <property type="project" value="TreeGrafter"/>
</dbReference>
<dbReference type="GO" id="GO:0042132">
    <property type="term" value="F:fructose 1,6-bisphosphate 1-phosphatase activity"/>
    <property type="evidence" value="ECO:0007669"/>
    <property type="project" value="UniProtKB-UniRule"/>
</dbReference>
<dbReference type="GO" id="GO:0000287">
    <property type="term" value="F:magnesium ion binding"/>
    <property type="evidence" value="ECO:0007669"/>
    <property type="project" value="UniProtKB-UniRule"/>
</dbReference>
<dbReference type="GO" id="GO:0030388">
    <property type="term" value="P:fructose 1,6-bisphosphate metabolic process"/>
    <property type="evidence" value="ECO:0007669"/>
    <property type="project" value="TreeGrafter"/>
</dbReference>
<dbReference type="GO" id="GO:0006002">
    <property type="term" value="P:fructose 6-phosphate metabolic process"/>
    <property type="evidence" value="ECO:0007669"/>
    <property type="project" value="TreeGrafter"/>
</dbReference>
<dbReference type="GO" id="GO:0006000">
    <property type="term" value="P:fructose metabolic process"/>
    <property type="evidence" value="ECO:0007669"/>
    <property type="project" value="TreeGrafter"/>
</dbReference>
<dbReference type="GO" id="GO:0006094">
    <property type="term" value="P:gluconeogenesis"/>
    <property type="evidence" value="ECO:0007669"/>
    <property type="project" value="UniProtKB-UniRule"/>
</dbReference>
<dbReference type="GO" id="GO:0019253">
    <property type="term" value="P:reductive pentose-phosphate cycle"/>
    <property type="evidence" value="ECO:0007669"/>
    <property type="project" value="UniProtKB-UniRule"/>
</dbReference>
<dbReference type="GO" id="GO:0005986">
    <property type="term" value="P:sucrose biosynthetic process"/>
    <property type="evidence" value="ECO:0007669"/>
    <property type="project" value="TreeGrafter"/>
</dbReference>
<dbReference type="CDD" id="cd00354">
    <property type="entry name" value="FBPase"/>
    <property type="match status" value="1"/>
</dbReference>
<dbReference type="FunFam" id="3.40.190.80:FF:000011">
    <property type="entry name" value="Fructose-1,6-bisphosphatase class 1"/>
    <property type="match status" value="1"/>
</dbReference>
<dbReference type="Gene3D" id="3.40.190.80">
    <property type="match status" value="1"/>
</dbReference>
<dbReference type="Gene3D" id="3.30.540.10">
    <property type="entry name" value="Fructose-1,6-Bisphosphatase, subunit A, domain 1"/>
    <property type="match status" value="1"/>
</dbReference>
<dbReference type="HAMAP" id="MF_01855">
    <property type="entry name" value="FBPase_class1"/>
    <property type="match status" value="1"/>
</dbReference>
<dbReference type="InterPro" id="IPR044015">
    <property type="entry name" value="FBPase_C_dom"/>
</dbReference>
<dbReference type="InterPro" id="IPR000146">
    <property type="entry name" value="FBPase_class-1"/>
</dbReference>
<dbReference type="InterPro" id="IPR033391">
    <property type="entry name" value="FBPase_N"/>
</dbReference>
<dbReference type="InterPro" id="IPR028343">
    <property type="entry name" value="FBPtase"/>
</dbReference>
<dbReference type="InterPro" id="IPR020548">
    <property type="entry name" value="Fructose_bisphosphatase_AS"/>
</dbReference>
<dbReference type="NCBIfam" id="NF006779">
    <property type="entry name" value="PRK09293.1-3"/>
    <property type="match status" value="1"/>
</dbReference>
<dbReference type="NCBIfam" id="NF006780">
    <property type="entry name" value="PRK09293.1-4"/>
    <property type="match status" value="1"/>
</dbReference>
<dbReference type="PANTHER" id="PTHR11556">
    <property type="entry name" value="FRUCTOSE-1,6-BISPHOSPHATASE-RELATED"/>
    <property type="match status" value="1"/>
</dbReference>
<dbReference type="PANTHER" id="PTHR11556:SF35">
    <property type="entry name" value="SEDOHEPTULOSE-1,7-BISPHOSPHATASE, CHLOROPLASTIC"/>
    <property type="match status" value="1"/>
</dbReference>
<dbReference type="Pfam" id="PF00316">
    <property type="entry name" value="FBPase"/>
    <property type="match status" value="1"/>
</dbReference>
<dbReference type="Pfam" id="PF18913">
    <property type="entry name" value="FBPase_C"/>
    <property type="match status" value="1"/>
</dbReference>
<dbReference type="PIRSF" id="PIRSF500210">
    <property type="entry name" value="FBPtase"/>
    <property type="match status" value="1"/>
</dbReference>
<dbReference type="PIRSF" id="PIRSF000904">
    <property type="entry name" value="FBPtase_SBPase"/>
    <property type="match status" value="1"/>
</dbReference>
<dbReference type="PRINTS" id="PR00115">
    <property type="entry name" value="F16BPHPHTASE"/>
</dbReference>
<dbReference type="SUPFAM" id="SSF56655">
    <property type="entry name" value="Carbohydrate phosphatase"/>
    <property type="match status" value="1"/>
</dbReference>
<dbReference type="PROSITE" id="PS00124">
    <property type="entry name" value="FBPASE"/>
    <property type="match status" value="1"/>
</dbReference>
<comment type="catalytic activity">
    <reaction evidence="1">
        <text>beta-D-fructose 1,6-bisphosphate + H2O = beta-D-fructose 6-phosphate + phosphate</text>
        <dbReference type="Rhea" id="RHEA:11064"/>
        <dbReference type="ChEBI" id="CHEBI:15377"/>
        <dbReference type="ChEBI" id="CHEBI:32966"/>
        <dbReference type="ChEBI" id="CHEBI:43474"/>
        <dbReference type="ChEBI" id="CHEBI:57634"/>
        <dbReference type="EC" id="3.1.3.11"/>
    </reaction>
</comment>
<comment type="cofactor">
    <cofactor evidence="1">
        <name>Mg(2+)</name>
        <dbReference type="ChEBI" id="CHEBI:18420"/>
    </cofactor>
    <text evidence="1">Binds 2 magnesium ions per subunit.</text>
</comment>
<comment type="pathway">
    <text evidence="1">Carbohydrate biosynthesis; Calvin cycle.</text>
</comment>
<comment type="subunit">
    <text evidence="1">Homotetramer.</text>
</comment>
<comment type="subcellular location">
    <subcellularLocation>
        <location evidence="1">Cytoplasm</location>
    </subcellularLocation>
</comment>
<comment type="similarity">
    <text evidence="1">Belongs to the FBPase class 1 family.</text>
</comment>
<reference key="1">
    <citation type="submission" date="2006-03" db="EMBL/GenBank/DDBJ databases">
        <title>Complete sequence of Rhodopseudomonas palustris BisB5.</title>
        <authorList>
            <consortium name="US DOE Joint Genome Institute"/>
            <person name="Copeland A."/>
            <person name="Lucas S."/>
            <person name="Lapidus A."/>
            <person name="Barry K."/>
            <person name="Detter J.C."/>
            <person name="Glavina del Rio T."/>
            <person name="Hammon N."/>
            <person name="Israni S."/>
            <person name="Dalin E."/>
            <person name="Tice H."/>
            <person name="Pitluck S."/>
            <person name="Chain P."/>
            <person name="Malfatti S."/>
            <person name="Shin M."/>
            <person name="Vergez L."/>
            <person name="Schmutz J."/>
            <person name="Larimer F."/>
            <person name="Land M."/>
            <person name="Hauser L."/>
            <person name="Pelletier D.A."/>
            <person name="Kyrpides N."/>
            <person name="Lykidis A."/>
            <person name="Oda Y."/>
            <person name="Harwood C.S."/>
            <person name="Richardson P."/>
        </authorList>
    </citation>
    <scope>NUCLEOTIDE SEQUENCE [LARGE SCALE GENOMIC DNA]</scope>
    <source>
        <strain>BisB5</strain>
    </source>
</reference>
<protein>
    <recommendedName>
        <fullName evidence="1">Fructose-1,6-bisphosphatase class 1</fullName>
        <shortName evidence="1">FBPase class 1</shortName>
        <ecNumber evidence="1">3.1.3.11</ecNumber>
    </recommendedName>
    <alternativeName>
        <fullName evidence="1">D-fructose-1,6-bisphosphate 1-phosphohydrolase class 1</fullName>
    </alternativeName>
</protein>
<organism>
    <name type="scientific">Rhodopseudomonas palustris (strain BisB5)</name>
    <dbReference type="NCBI Taxonomy" id="316057"/>
    <lineage>
        <taxon>Bacteria</taxon>
        <taxon>Pseudomonadati</taxon>
        <taxon>Pseudomonadota</taxon>
        <taxon>Alphaproteobacteria</taxon>
        <taxon>Hyphomicrobiales</taxon>
        <taxon>Nitrobacteraceae</taxon>
        <taxon>Rhodopseudomonas</taxon>
    </lineage>
</organism>
<proteinExistence type="inferred from homology"/>
<gene>
    <name evidence="1" type="primary">fbp</name>
    <name type="ordered locus">RPD_1050</name>
</gene>
<accession>Q13CA1</accession>